<proteinExistence type="evidence at protein level"/>
<accession>P0DP90</accession>
<accession>P00892</accession>
<accession>P76749</accession>
<feature type="chain" id="PRO_0000090788" description="Acetolactate synthase isozyme 2 large subunit">
    <location>
        <begin position="1"/>
        <end position="548"/>
    </location>
</feature>
<feature type="region of interest" description="Thiamine pyrophosphate binding">
    <location>
        <begin position="377"/>
        <end position="457"/>
    </location>
</feature>
<feature type="binding site" evidence="1">
    <location>
        <position position="47"/>
    </location>
    <ligand>
        <name>thiamine diphosphate</name>
        <dbReference type="ChEBI" id="CHEBI:58937"/>
    </ligand>
</feature>
<feature type="binding site" evidence="1">
    <location>
        <position position="149"/>
    </location>
    <ligand>
        <name>FAD</name>
        <dbReference type="ChEBI" id="CHEBI:57692"/>
    </ligand>
</feature>
<feature type="binding site" evidence="1">
    <location>
        <begin position="251"/>
        <end position="272"/>
    </location>
    <ligand>
        <name>FAD</name>
        <dbReference type="ChEBI" id="CHEBI:57692"/>
    </ligand>
</feature>
<feature type="binding site" evidence="1">
    <location>
        <begin position="294"/>
        <end position="313"/>
    </location>
    <ligand>
        <name>FAD</name>
        <dbReference type="ChEBI" id="CHEBI:57692"/>
    </ligand>
</feature>
<feature type="binding site" evidence="1">
    <location>
        <position position="428"/>
    </location>
    <ligand>
        <name>Mg(2+)</name>
        <dbReference type="ChEBI" id="CHEBI:18420"/>
    </ligand>
</feature>
<feature type="binding site" evidence="1">
    <location>
        <position position="455"/>
    </location>
    <ligand>
        <name>Mg(2+)</name>
        <dbReference type="ChEBI" id="CHEBI:18420"/>
    </ligand>
</feature>
<feature type="sequence conflict" description="In Ref. 1; AAA24021." evidence="4" ref="1">
    <original>F</original>
    <variation>S</variation>
    <location>
        <position position="284"/>
    </location>
</feature>
<keyword id="KW-0028">Amino-acid biosynthesis</keyword>
<keyword id="KW-0100">Branched-chain amino acid biosynthesis</keyword>
<keyword id="KW-0903">Direct protein sequencing</keyword>
<keyword id="KW-0274">FAD</keyword>
<keyword id="KW-0285">Flavoprotein</keyword>
<keyword id="KW-0460">Magnesium</keyword>
<keyword id="KW-0479">Metal-binding</keyword>
<keyword id="KW-0786">Thiamine pyrophosphate</keyword>
<keyword id="KW-0808">Transferase</keyword>
<gene>
    <name type="primary">ilvG</name>
</gene>
<comment type="function">
    <text evidence="3">Catalyzes the first step in the biosynthesis of branched-chain amino acids.</text>
</comment>
<comment type="catalytic activity">
    <reaction evidence="3">
        <text>2 pyruvate + H(+) = (2S)-2-acetolactate + CO2</text>
        <dbReference type="Rhea" id="RHEA:25249"/>
        <dbReference type="ChEBI" id="CHEBI:15361"/>
        <dbReference type="ChEBI" id="CHEBI:15378"/>
        <dbReference type="ChEBI" id="CHEBI:16526"/>
        <dbReference type="ChEBI" id="CHEBI:58476"/>
        <dbReference type="EC" id="2.2.1.6"/>
    </reaction>
</comment>
<comment type="cofactor">
    <cofactor evidence="3">
        <name>FAD</name>
        <dbReference type="ChEBI" id="CHEBI:57692"/>
    </cofactor>
    <text evidence="3">Binds 1 FAD per subunit. The role of this cofactor is not clear considering that the reaction does not involve redox chemistry. However, after removal of the FAD no AHAS activity can be detected (PubMed:9581571), indicating that the cofactor is essential. The large subunit alone does not bind FAD, and FAD is not necessary for association of the subunits.</text>
</comment>
<comment type="cofactor">
    <cofactor evidence="3">
        <name>Mg(2+)</name>
        <dbReference type="ChEBI" id="CHEBI:18420"/>
    </cofactor>
    <text evidence="3">Binds 1 Mg(2+) ion per subunit. Is not necessary for subunit association.</text>
</comment>
<comment type="cofactor">
    <cofactor evidence="3">
        <name>thiamine diphosphate</name>
        <dbReference type="ChEBI" id="CHEBI:58937"/>
    </cofactor>
    <text evidence="3">Binds 1 thiamine pyrophosphate per subunit. Is not necessary for subunit association.</text>
</comment>
<comment type="activity regulation">
    <text evidence="3">Inhibited by the herbicides chlorimuron ethyl, chlorsulfuron and imazapyr.</text>
</comment>
<comment type="biophysicochemical properties">
    <kinetics>
        <KM evidence="3">2.6 mM for pyruvate</KM>
    </kinetics>
</comment>
<comment type="pathway">
    <text>Amino-acid biosynthesis; L-isoleucine biosynthesis; L-isoleucine from 2-oxobutanoate: step 1/4.</text>
</comment>
<comment type="pathway">
    <text>Amino-acid biosynthesis; L-valine biosynthesis; L-valine from pyruvate: step 1/4.</text>
</comment>
<comment type="subunit">
    <text evidence="3">Tetramer of two large (IlvG) and two small (IlvM) chains.</text>
</comment>
<comment type="interaction">
    <interactant intactId="EBI-1133701">
        <id>P0DP90</id>
    </interactant>
    <interactant intactId="EBI-1133722">
        <id>P0ADG1</id>
        <label>ilvM</label>
    </interactant>
    <organismsDiffer>false</organismsDiffer>
    <experiments>2</experiments>
</comment>
<comment type="miscellaneous">
    <text evidence="2">E.coli contains genes for 3 AHAS isozymes: ilvBN, ilvGM and ilvIH. In strain K12 only the Val-inhibitable ilvBN and ilvIH are expressed; ilvGM has a frameshift that disturbs the ilvG reading frame. IlvG (this protein) is Val-resistant and is expressed in K12 strains having what used to be referred to as ilv0 mutations. The ilv02096 mutation (shown here, an insertion of 2 bp, PubMed:7015336) causes a frameshift which restores the open reading frame, permitting the expression of this isozyme. The inactive N-terminal pseudogene fragment is found here (AC P0DP89).</text>
</comment>
<comment type="similarity">
    <text evidence="4">Belongs to the TPP enzyme family.</text>
</comment>
<organism>
    <name type="scientific">Escherichia coli (strain K12)</name>
    <dbReference type="NCBI Taxonomy" id="83333"/>
    <lineage>
        <taxon>Bacteria</taxon>
        <taxon>Pseudomonadati</taxon>
        <taxon>Pseudomonadota</taxon>
        <taxon>Gammaproteobacteria</taxon>
        <taxon>Enterobacterales</taxon>
        <taxon>Enterobacteriaceae</taxon>
        <taxon>Escherichia</taxon>
    </lineage>
</organism>
<dbReference type="EC" id="2.2.1.6" evidence="3"/>
<dbReference type="EMBL" id="M32253">
    <property type="protein sequence ID" value="AAA24021.1"/>
    <property type="molecule type" value="Genomic_DNA"/>
</dbReference>
<dbReference type="EMBL" id="X04890">
    <property type="protein sequence ID" value="CAA28573.1"/>
    <property type="molecule type" value="Genomic_DNA"/>
</dbReference>
<dbReference type="EMBL" id="M37337">
    <property type="protein sequence ID" value="AAA24608.1"/>
    <property type="molecule type" value="Genomic_DNA"/>
</dbReference>
<dbReference type="EMBL" id="V00289">
    <property type="protein sequence ID" value="CAA23556.1"/>
    <property type="molecule type" value="Genomic_DNA"/>
</dbReference>
<dbReference type="EMBL" id="M10313">
    <property type="protein sequence ID" value="AAB59050.1"/>
    <property type="molecule type" value="Genomic_DNA"/>
</dbReference>
<dbReference type="EMBL" id="X02413">
    <property type="protein sequence ID" value="CAA26260.1"/>
    <property type="molecule type" value="Genomic_DNA"/>
</dbReference>
<dbReference type="PIR" id="A26570">
    <property type="entry name" value="YCEC"/>
</dbReference>
<dbReference type="SMR" id="P0DP90"/>
<dbReference type="ComplexPortal" id="CPX-3570">
    <property type="entry name" value="Acetolactate synthase II complex"/>
</dbReference>
<dbReference type="IntAct" id="P0DP90">
    <property type="interactions" value="4"/>
</dbReference>
<dbReference type="EchoBASE" id="EB0493"/>
<dbReference type="SABIO-RK" id="P0DP90"/>
<dbReference type="UniPathway" id="UPA00047">
    <property type="reaction ID" value="UER00055"/>
</dbReference>
<dbReference type="UniPathway" id="UPA00049">
    <property type="reaction ID" value="UER00059"/>
</dbReference>
<dbReference type="GO" id="GO:0005948">
    <property type="term" value="C:acetolactate synthase complex"/>
    <property type="evidence" value="ECO:0000353"/>
    <property type="project" value="ComplexPortal"/>
</dbReference>
<dbReference type="GO" id="GO:0003984">
    <property type="term" value="F:acetolactate synthase activity"/>
    <property type="evidence" value="ECO:0007669"/>
    <property type="project" value="UniProtKB-EC"/>
</dbReference>
<dbReference type="GO" id="GO:0050660">
    <property type="term" value="F:flavin adenine dinucleotide binding"/>
    <property type="evidence" value="ECO:0007669"/>
    <property type="project" value="InterPro"/>
</dbReference>
<dbReference type="GO" id="GO:0000287">
    <property type="term" value="F:magnesium ion binding"/>
    <property type="evidence" value="ECO:0007669"/>
    <property type="project" value="InterPro"/>
</dbReference>
<dbReference type="GO" id="GO:0030976">
    <property type="term" value="F:thiamine pyrophosphate binding"/>
    <property type="evidence" value="ECO:0007669"/>
    <property type="project" value="InterPro"/>
</dbReference>
<dbReference type="GO" id="GO:0009082">
    <property type="term" value="P:branched-chain amino acid biosynthetic process"/>
    <property type="evidence" value="ECO:0000314"/>
    <property type="project" value="ComplexPortal"/>
</dbReference>
<dbReference type="GO" id="GO:0009097">
    <property type="term" value="P:isoleucine biosynthetic process"/>
    <property type="evidence" value="ECO:0007669"/>
    <property type="project" value="UniProtKB-UniPathway"/>
</dbReference>
<dbReference type="GO" id="GO:0009099">
    <property type="term" value="P:L-valine biosynthetic process"/>
    <property type="evidence" value="ECO:0007669"/>
    <property type="project" value="UniProtKB-UniPathway"/>
</dbReference>
<dbReference type="CDD" id="cd02015">
    <property type="entry name" value="TPP_AHAS"/>
    <property type="match status" value="1"/>
</dbReference>
<dbReference type="CDD" id="cd07035">
    <property type="entry name" value="TPP_PYR_POX_like"/>
    <property type="match status" value="1"/>
</dbReference>
<dbReference type="FunFam" id="3.40.50.1220:FF:000008">
    <property type="entry name" value="Acetolactate synthase"/>
    <property type="match status" value="1"/>
</dbReference>
<dbReference type="FunFam" id="3.40.50.970:FF:000007">
    <property type="entry name" value="Acetolactate synthase"/>
    <property type="match status" value="1"/>
</dbReference>
<dbReference type="FunFam" id="3.40.50.970:FF:000016">
    <property type="entry name" value="Acetolactate synthase"/>
    <property type="match status" value="1"/>
</dbReference>
<dbReference type="Gene3D" id="3.40.50.970">
    <property type="match status" value="2"/>
</dbReference>
<dbReference type="Gene3D" id="3.40.50.1220">
    <property type="entry name" value="TPP-binding domain"/>
    <property type="match status" value="1"/>
</dbReference>
<dbReference type="InterPro" id="IPR012846">
    <property type="entry name" value="Acetolactate_synth_lsu"/>
</dbReference>
<dbReference type="InterPro" id="IPR039368">
    <property type="entry name" value="AHAS_TPP"/>
</dbReference>
<dbReference type="InterPro" id="IPR029035">
    <property type="entry name" value="DHS-like_NAD/FAD-binding_dom"/>
</dbReference>
<dbReference type="InterPro" id="IPR029061">
    <property type="entry name" value="THDP-binding"/>
</dbReference>
<dbReference type="InterPro" id="IPR012000">
    <property type="entry name" value="Thiamin_PyroP_enz_cen_dom"/>
</dbReference>
<dbReference type="InterPro" id="IPR012001">
    <property type="entry name" value="Thiamin_PyroP_enz_TPP-bd_dom"/>
</dbReference>
<dbReference type="InterPro" id="IPR000399">
    <property type="entry name" value="TPP-bd_CS"/>
</dbReference>
<dbReference type="InterPro" id="IPR045229">
    <property type="entry name" value="TPP_enz"/>
</dbReference>
<dbReference type="InterPro" id="IPR011766">
    <property type="entry name" value="TPP_enzyme_TPP-bd"/>
</dbReference>
<dbReference type="NCBIfam" id="TIGR00118">
    <property type="entry name" value="acolac_lg"/>
    <property type="match status" value="1"/>
</dbReference>
<dbReference type="NCBIfam" id="NF006524">
    <property type="entry name" value="PRK08978.1"/>
    <property type="match status" value="1"/>
</dbReference>
<dbReference type="PANTHER" id="PTHR18968:SF142">
    <property type="entry name" value="ACETOLACTATE SYNTHASE"/>
    <property type="match status" value="1"/>
</dbReference>
<dbReference type="PANTHER" id="PTHR18968">
    <property type="entry name" value="THIAMINE PYROPHOSPHATE ENZYMES"/>
    <property type="match status" value="1"/>
</dbReference>
<dbReference type="Pfam" id="PF02775">
    <property type="entry name" value="TPP_enzyme_C"/>
    <property type="match status" value="1"/>
</dbReference>
<dbReference type="Pfam" id="PF00205">
    <property type="entry name" value="TPP_enzyme_M"/>
    <property type="match status" value="1"/>
</dbReference>
<dbReference type="Pfam" id="PF02776">
    <property type="entry name" value="TPP_enzyme_N"/>
    <property type="match status" value="1"/>
</dbReference>
<dbReference type="SUPFAM" id="SSF52467">
    <property type="entry name" value="DHS-like NAD/FAD-binding domain"/>
    <property type="match status" value="1"/>
</dbReference>
<dbReference type="SUPFAM" id="SSF52518">
    <property type="entry name" value="Thiamin diphosphate-binding fold (THDP-binding)"/>
    <property type="match status" value="2"/>
</dbReference>
<dbReference type="PROSITE" id="PS00187">
    <property type="entry name" value="TPP_ENZYMES"/>
    <property type="match status" value="1"/>
</dbReference>
<name>ILVG_ECOLI</name>
<protein>
    <recommendedName>
        <fullName>Acetolactate synthase isozyme 2 large subunit</fullName>
        <shortName>AHAS-II</shortName>
        <ecNumber evidence="3">2.2.1.6</ecNumber>
    </recommendedName>
    <alternativeName>
        <fullName>ALS-II</fullName>
    </alternativeName>
    <alternativeName>
        <fullName>Acetohydroxy-acid synthase II large subunit</fullName>
    </alternativeName>
</protein>
<evidence type="ECO:0000250" key="1"/>
<evidence type="ECO:0000269" key="2">
    <source>
    </source>
</evidence>
<evidence type="ECO:0000269" key="3">
    <source>
    </source>
</evidence>
<evidence type="ECO:0000305" key="4"/>
<sequence>MNGAQWVVHALRAQGVNTVFGYPGGAIMPVYDALYDGGVEHLLCRHEQGAAMAAIGYARATGKTGVCIATSGPGATNLITGLADALLDSIPVVAITGQVSAPFIGTDAFQEVDVLGLSLACTKHSFLVQSLEELPRIMAEAFDVACSGRPGPVLVDIPKDIQLASGDLEPWFTTVENEVTFPHAEVEQARQMLAKAQKPMLYVGGGVGMAQAVPALREFLAATKMPATCTLKGLGAVEADYPYYLGMLGMHGTKAANFAVQECDLLIAVGARFDDRVTGKLNTFAPHASVIHMDIDPAEMNKLRQAHVALQGDLNALLPALQQPLNQYDWQQHCAQLRDEHSWRYDHPGDAIYAPLLLKQLSDRKPADCVVTTDVGQHQMWAAQHIAHTRPENFITSSGLGTMGFGLPAAVGAQVARPNDTVVCISGDGSFMMNVQELGTVKRKQLPLKIVLLDNQRLGMVRQWQQLFFQERYSETTLTDNPDFLMLASAFGIHGQHITRKDQVEAALDTMLNSDGPYLLHVSIDELENVWPLVPPGASNSEMLEKLS</sequence>
<reference key="1">
    <citation type="journal article" date="1987" name="Nucleic Acids Res.">
        <title>The complete nucleotide sequence of the ilvGMEDA operon of Escherichia coli K-12.</title>
        <authorList>
            <person name="Lawther R.P."/>
            <person name="Wek R.C."/>
            <person name="Lopes J.M."/>
            <person name="Pereira R."/>
            <person name="Taillon B.E."/>
            <person name="Hatfield G.W."/>
        </authorList>
    </citation>
    <scope>NUCLEOTIDE SEQUENCE [GENOMIC DNA]</scope>
    <source>
        <strain>K12 / mutant ILV02096</strain>
    </source>
</reference>
<reference key="2">
    <citation type="journal article" date="1987" name="Nucleic Acids Res.">
        <authorList>
            <person name="Lawther R.P."/>
            <person name="Wek R.C."/>
            <person name="Lopes J.M."/>
            <person name="Pereira R."/>
            <person name="Taillon B.E."/>
            <person name="Hatfield G.W."/>
        </authorList>
    </citation>
    <scope>ERRATUM OF PUBMED:3550695</scope>
</reference>
<reference key="3">
    <citation type="journal article" date="1988" name="Nucleic Acids Res.">
        <authorList>
            <person name="Lawther R.P."/>
            <person name="Wek R.C."/>
            <person name="Lopes J.M."/>
            <person name="Pereira R."/>
            <person name="Taillon B.E."/>
            <person name="Hatfield G.W."/>
        </authorList>
    </citation>
    <scope>ERRATUM OF PUBMED:3550695</scope>
</reference>
<reference key="4">
    <citation type="journal article" date="1991" name="Gene">
        <title>Sequence and transcriptional activity of the Escherichia coli K-12 chromosome region between rrnC and ilvGMEDA.</title>
        <authorList>
            <person name="Coppola G."/>
            <person name="Huang F."/>
            <person name="Riley J."/>
            <person name="Cox J.L."/>
            <person name="Hantzopoulos P."/>
            <person name="Zhou L.-B."/>
            <person name="Calhoun D.H."/>
        </authorList>
    </citation>
    <scope>NUCLEOTIDE SEQUENCE [GENOMIC DNA] OF 1-402</scope>
    <source>
        <strain>K12</strain>
    </source>
</reference>
<reference key="5">
    <citation type="journal article" date="1980" name="Proc. Natl. Acad. Sci. U.S.A.">
        <title>Multivalent translational control of transcription termination at attenuator of ilvGEDA operon of Escherichia coli K-12.</title>
        <authorList>
            <person name="Lawther R.P."/>
            <person name="Hatfield G.W."/>
        </authorList>
    </citation>
    <scope>NUCLEOTIDE SEQUENCE [GENOMIC DNA] OF 1-14</scope>
    <source>
        <strain>K12</strain>
    </source>
</reference>
<reference key="6">
    <citation type="journal article" date="1997" name="Biochem. J.">
        <title>Purification of Escherichia coli acetohydroxyacid synthase isoenzyme II and reconstitution of active enzyme from its individual pure subunits.</title>
        <authorList>
            <person name="Hill C.M."/>
            <person name="Pang S.S."/>
            <person name="Duggleby R.G."/>
        </authorList>
    </citation>
    <scope>PROTEIN SEQUENCE OF 1-3</scope>
    <scope>FUNCTION</scope>
    <scope>CATALYTIC ACTIVITY</scope>
    <scope>COFACTOR</scope>
    <scope>REMOVAL OF FAD COFACTOR</scope>
    <scope>ACTIVITY REGULATION</scope>
    <scope>BIOPHYSICOCHEMICAL PROPERTIES</scope>
    <scope>SUBUNIT</scope>
    <source>
        <strain>K12 / mutant ILV02096</strain>
    </source>
</reference>
<reference key="7">
    <citation type="journal article" date="1981" name="Proc. Natl. Acad. Sci. U.S.A.">
        <title>Molecular basis of valine resistance in Escherichia coli K-12.</title>
        <authorList>
            <person name="Lawther R.P."/>
            <person name="Calhoun D.H."/>
            <person name="Adams C.W."/>
            <person name="Hauser C.A."/>
            <person name="Gray J."/>
            <person name="Hatfield G.W."/>
        </authorList>
    </citation>
    <scope>NUCLEOTIDE SEQUENCE [GENOMIC DNA] OF 28-548</scope>
    <scope>IDENTIFICATION OF FRAMESHIFT THAT RESTORES THE READING FRAME</scope>
    <source>
        <strain>K12 / mutant ILV02096</strain>
    </source>
</reference>
<reference key="8">
    <citation type="journal article" date="1985" name="J. Biochem.">
        <title>Branched-chain amino acid aminotransferase of Escherichia coli: nucleotide sequence of the ilvE gene and the deduced amino acid sequence.</title>
        <authorList>
            <person name="Kuramitsu S."/>
            <person name="Ogawa T."/>
            <person name="Ogawa H."/>
            <person name="Kagamiyama H."/>
        </authorList>
    </citation>
    <scope>NUCLEOTIDE SEQUENCE [GENOMIC DNA] OF 543-548</scope>
    <source>
        <strain>K12</strain>
    </source>
</reference>